<feature type="chain" id="PRO_0000142169" description="Imidazole glycerol phosphate synthase subunit HisF">
    <location>
        <begin position="1"/>
        <end position="252"/>
    </location>
</feature>
<feature type="active site" evidence="1">
    <location>
        <position position="11"/>
    </location>
</feature>
<feature type="active site" evidence="1">
    <location>
        <position position="130"/>
    </location>
</feature>
<sequence>MLAKRIIPCLDVADGRVKKGVNFVNLTDVGDPVAIAAAYQQQGADELVFLDIAATNEHRETMAAMVEQVSAQVFMPLTIGGGITSVADMQRILRAGADKTAINSAAVANPELIRAGAEKFGNQCIVVAIDAAWDAAAGQYRVYTHGGQQATDLDAVAWAKQAVALGAGELLVTSMDRDGTKAGFDTKLYQALGATVNVPIIASGGAGNLQDFVDVFSTTPVDGALAASVFHFGELTIADVKATLRKQGVVVR</sequence>
<organism>
    <name type="scientific">Lactiplantibacillus plantarum (strain ATCC BAA-793 / NCIMB 8826 / WCFS1)</name>
    <name type="common">Lactobacillus plantarum</name>
    <dbReference type="NCBI Taxonomy" id="220668"/>
    <lineage>
        <taxon>Bacteria</taxon>
        <taxon>Bacillati</taxon>
        <taxon>Bacillota</taxon>
        <taxon>Bacilli</taxon>
        <taxon>Lactobacillales</taxon>
        <taxon>Lactobacillaceae</taxon>
        <taxon>Lactiplantibacillus</taxon>
    </lineage>
</organism>
<evidence type="ECO:0000255" key="1">
    <source>
        <dbReference type="HAMAP-Rule" id="MF_01013"/>
    </source>
</evidence>
<name>HIS6_LACPL</name>
<comment type="function">
    <text evidence="1">IGPS catalyzes the conversion of PRFAR and glutamine to IGP, AICAR and glutamate. The HisF subunit catalyzes the cyclization activity that produces IGP and AICAR from PRFAR using the ammonia provided by the HisH subunit.</text>
</comment>
<comment type="catalytic activity">
    <reaction evidence="1">
        <text>5-[(5-phospho-1-deoxy-D-ribulos-1-ylimino)methylamino]-1-(5-phospho-beta-D-ribosyl)imidazole-4-carboxamide + L-glutamine = D-erythro-1-(imidazol-4-yl)glycerol 3-phosphate + 5-amino-1-(5-phospho-beta-D-ribosyl)imidazole-4-carboxamide + L-glutamate + H(+)</text>
        <dbReference type="Rhea" id="RHEA:24793"/>
        <dbReference type="ChEBI" id="CHEBI:15378"/>
        <dbReference type="ChEBI" id="CHEBI:29985"/>
        <dbReference type="ChEBI" id="CHEBI:58278"/>
        <dbReference type="ChEBI" id="CHEBI:58359"/>
        <dbReference type="ChEBI" id="CHEBI:58475"/>
        <dbReference type="ChEBI" id="CHEBI:58525"/>
        <dbReference type="EC" id="4.3.2.10"/>
    </reaction>
</comment>
<comment type="pathway">
    <text evidence="1">Amino-acid biosynthesis; L-histidine biosynthesis; L-histidine from 5-phospho-alpha-D-ribose 1-diphosphate: step 5/9.</text>
</comment>
<comment type="subunit">
    <text evidence="1">Heterodimer of HisH and HisF.</text>
</comment>
<comment type="subcellular location">
    <subcellularLocation>
        <location evidence="1">Cytoplasm</location>
    </subcellularLocation>
</comment>
<comment type="similarity">
    <text evidence="1">Belongs to the HisA/HisF family.</text>
</comment>
<dbReference type="EC" id="4.3.2.10" evidence="1"/>
<dbReference type="EMBL" id="AL935263">
    <property type="protein sequence ID" value="CCC79710.1"/>
    <property type="molecule type" value="Genomic_DNA"/>
</dbReference>
<dbReference type="RefSeq" id="WP_003646590.1">
    <property type="nucleotide sequence ID" value="NC_004567.2"/>
</dbReference>
<dbReference type="RefSeq" id="YP_004890224.1">
    <property type="nucleotide sequence ID" value="NC_004567.2"/>
</dbReference>
<dbReference type="SMR" id="Q88UE3"/>
<dbReference type="STRING" id="220668.lp_2554"/>
<dbReference type="EnsemblBacteria" id="CCC79710">
    <property type="protein sequence ID" value="CCC79710"/>
    <property type="gene ID" value="lp_2554"/>
</dbReference>
<dbReference type="GeneID" id="77215821"/>
<dbReference type="KEGG" id="lpl:lp_2554"/>
<dbReference type="PATRIC" id="fig|220668.9.peg.2146"/>
<dbReference type="eggNOG" id="COG0107">
    <property type="taxonomic scope" value="Bacteria"/>
</dbReference>
<dbReference type="HOGENOM" id="CLU_048577_4_0_9"/>
<dbReference type="OrthoDB" id="9781903at2"/>
<dbReference type="PhylomeDB" id="Q88UE3"/>
<dbReference type="UniPathway" id="UPA00031">
    <property type="reaction ID" value="UER00010"/>
</dbReference>
<dbReference type="Proteomes" id="UP000000432">
    <property type="component" value="Chromosome"/>
</dbReference>
<dbReference type="GO" id="GO:0005737">
    <property type="term" value="C:cytoplasm"/>
    <property type="evidence" value="ECO:0007669"/>
    <property type="project" value="UniProtKB-SubCell"/>
</dbReference>
<dbReference type="GO" id="GO:0000107">
    <property type="term" value="F:imidazoleglycerol-phosphate synthase activity"/>
    <property type="evidence" value="ECO:0007669"/>
    <property type="project" value="UniProtKB-UniRule"/>
</dbReference>
<dbReference type="GO" id="GO:0016829">
    <property type="term" value="F:lyase activity"/>
    <property type="evidence" value="ECO:0007669"/>
    <property type="project" value="UniProtKB-KW"/>
</dbReference>
<dbReference type="GO" id="GO:0000105">
    <property type="term" value="P:L-histidine biosynthetic process"/>
    <property type="evidence" value="ECO:0007669"/>
    <property type="project" value="UniProtKB-UniRule"/>
</dbReference>
<dbReference type="CDD" id="cd04731">
    <property type="entry name" value="HisF"/>
    <property type="match status" value="1"/>
</dbReference>
<dbReference type="FunFam" id="3.20.20.70:FF:000006">
    <property type="entry name" value="Imidazole glycerol phosphate synthase subunit HisF"/>
    <property type="match status" value="1"/>
</dbReference>
<dbReference type="Gene3D" id="3.20.20.70">
    <property type="entry name" value="Aldolase class I"/>
    <property type="match status" value="1"/>
</dbReference>
<dbReference type="HAMAP" id="MF_01013">
    <property type="entry name" value="HisF"/>
    <property type="match status" value="1"/>
</dbReference>
<dbReference type="InterPro" id="IPR013785">
    <property type="entry name" value="Aldolase_TIM"/>
</dbReference>
<dbReference type="InterPro" id="IPR006062">
    <property type="entry name" value="His_biosynth"/>
</dbReference>
<dbReference type="InterPro" id="IPR004651">
    <property type="entry name" value="HisF"/>
</dbReference>
<dbReference type="InterPro" id="IPR050064">
    <property type="entry name" value="IGPS_HisA/HisF"/>
</dbReference>
<dbReference type="InterPro" id="IPR011060">
    <property type="entry name" value="RibuloseP-bd_barrel"/>
</dbReference>
<dbReference type="NCBIfam" id="TIGR00735">
    <property type="entry name" value="hisF"/>
    <property type="match status" value="1"/>
</dbReference>
<dbReference type="PANTHER" id="PTHR21235:SF2">
    <property type="entry name" value="IMIDAZOLE GLYCEROL PHOSPHATE SYNTHASE HISHF"/>
    <property type="match status" value="1"/>
</dbReference>
<dbReference type="PANTHER" id="PTHR21235">
    <property type="entry name" value="IMIDAZOLE GLYCEROL PHOSPHATE SYNTHASE SUBUNIT HISF/H IGP SYNTHASE SUBUNIT HISF/H"/>
    <property type="match status" value="1"/>
</dbReference>
<dbReference type="Pfam" id="PF00977">
    <property type="entry name" value="His_biosynth"/>
    <property type="match status" value="1"/>
</dbReference>
<dbReference type="SUPFAM" id="SSF51366">
    <property type="entry name" value="Ribulose-phoshate binding barrel"/>
    <property type="match status" value="1"/>
</dbReference>
<protein>
    <recommendedName>
        <fullName evidence="1">Imidazole glycerol phosphate synthase subunit HisF</fullName>
        <ecNumber evidence="1">4.3.2.10</ecNumber>
    </recommendedName>
    <alternativeName>
        <fullName evidence="1">IGP synthase cyclase subunit</fullName>
    </alternativeName>
    <alternativeName>
        <fullName evidence="1">IGP synthase subunit HisF</fullName>
    </alternativeName>
    <alternativeName>
        <fullName evidence="1">ImGP synthase subunit HisF</fullName>
        <shortName evidence="1">IGPS subunit HisF</shortName>
    </alternativeName>
</protein>
<accession>Q88UE3</accession>
<accession>F9UR71</accession>
<gene>
    <name evidence="1" type="primary">hisF</name>
    <name type="ordered locus">lp_2554</name>
</gene>
<proteinExistence type="inferred from homology"/>
<reference key="1">
    <citation type="journal article" date="2003" name="Proc. Natl. Acad. Sci. U.S.A.">
        <title>Complete genome sequence of Lactobacillus plantarum WCFS1.</title>
        <authorList>
            <person name="Kleerebezem M."/>
            <person name="Boekhorst J."/>
            <person name="van Kranenburg R."/>
            <person name="Molenaar D."/>
            <person name="Kuipers O.P."/>
            <person name="Leer R."/>
            <person name="Tarchini R."/>
            <person name="Peters S.A."/>
            <person name="Sandbrink H.M."/>
            <person name="Fiers M.W.E.J."/>
            <person name="Stiekema W."/>
            <person name="Klein Lankhorst R.M."/>
            <person name="Bron P.A."/>
            <person name="Hoffer S.M."/>
            <person name="Nierop Groot M.N."/>
            <person name="Kerkhoven R."/>
            <person name="De Vries M."/>
            <person name="Ursing B."/>
            <person name="De Vos W.M."/>
            <person name="Siezen R.J."/>
        </authorList>
    </citation>
    <scope>NUCLEOTIDE SEQUENCE [LARGE SCALE GENOMIC DNA]</scope>
    <source>
        <strain>ATCC BAA-793 / NCIMB 8826 / WCFS1</strain>
    </source>
</reference>
<reference key="2">
    <citation type="journal article" date="2012" name="J. Bacteriol.">
        <title>Complete resequencing and reannotation of the Lactobacillus plantarum WCFS1 genome.</title>
        <authorList>
            <person name="Siezen R.J."/>
            <person name="Francke C."/>
            <person name="Renckens B."/>
            <person name="Boekhorst J."/>
            <person name="Wels M."/>
            <person name="Kleerebezem M."/>
            <person name="van Hijum S.A."/>
        </authorList>
    </citation>
    <scope>NUCLEOTIDE SEQUENCE [LARGE SCALE GENOMIC DNA]</scope>
    <scope>GENOME REANNOTATION</scope>
    <source>
        <strain>ATCC BAA-793 / NCIMB 8826 / WCFS1</strain>
    </source>
</reference>
<keyword id="KW-0028">Amino-acid biosynthesis</keyword>
<keyword id="KW-0963">Cytoplasm</keyword>
<keyword id="KW-0368">Histidine biosynthesis</keyword>
<keyword id="KW-0456">Lyase</keyword>
<keyword id="KW-1185">Reference proteome</keyword>